<sequence length="466" mass="53687">MIKVYNTLNKKKEEFIPLTPGEVKMYVCGPTVYNFFHIGNGRTFIVFDTIRRYFEYRGFKVDFVQNFTDIDDKMIKKANEEGITVKKIGDTYIKEYYQDADALNIERATVNPRATEFIGEIIKFVKGLVDKGYAYEVDGDVYFSTKKFEGYGKLSGQNIEDLQSGARISVDERKKDPMDFAIWKAQKPGEPAWNSPWGMGRPGWHIECSCMAKKLLGETIDIHAGGSDLKFPHHENEIAQSEALTGEPFARYWLHSAFVNVNNEKMSKSLNNFFTAREILERYDADVIRFLMLSAHYRQQLNFSEDLLESAKASVERIYNAIGNLENLIDEVSREEMNEEEKAYLESLNKYKEKYIEKMDDDFNTADAITAIFDLIKDTNTNITIDSSKELAQKALELIRELGAPLGMFQKSTKGNLEEEIEALIAKRQQARKDRDFALADKIRDELKDRGIVLEDTPQGVRWKRI</sequence>
<dbReference type="EC" id="6.1.1.16" evidence="1"/>
<dbReference type="EMBL" id="CP000312">
    <property type="protein sequence ID" value="ABG87263.1"/>
    <property type="molecule type" value="Genomic_DNA"/>
</dbReference>
<dbReference type="SMR" id="Q0SQC1"/>
<dbReference type="KEGG" id="cpr:CPR_2424"/>
<dbReference type="Proteomes" id="UP000001824">
    <property type="component" value="Chromosome"/>
</dbReference>
<dbReference type="GO" id="GO:0005829">
    <property type="term" value="C:cytosol"/>
    <property type="evidence" value="ECO:0007669"/>
    <property type="project" value="TreeGrafter"/>
</dbReference>
<dbReference type="GO" id="GO:0005524">
    <property type="term" value="F:ATP binding"/>
    <property type="evidence" value="ECO:0007669"/>
    <property type="project" value="UniProtKB-UniRule"/>
</dbReference>
<dbReference type="GO" id="GO:0004817">
    <property type="term" value="F:cysteine-tRNA ligase activity"/>
    <property type="evidence" value="ECO:0007669"/>
    <property type="project" value="UniProtKB-UniRule"/>
</dbReference>
<dbReference type="GO" id="GO:0008270">
    <property type="term" value="F:zinc ion binding"/>
    <property type="evidence" value="ECO:0007669"/>
    <property type="project" value="UniProtKB-UniRule"/>
</dbReference>
<dbReference type="GO" id="GO:0006423">
    <property type="term" value="P:cysteinyl-tRNA aminoacylation"/>
    <property type="evidence" value="ECO:0007669"/>
    <property type="project" value="UniProtKB-UniRule"/>
</dbReference>
<dbReference type="CDD" id="cd00672">
    <property type="entry name" value="CysRS_core"/>
    <property type="match status" value="1"/>
</dbReference>
<dbReference type="FunFam" id="3.40.50.620:FF:000009">
    <property type="entry name" value="Cysteine--tRNA ligase"/>
    <property type="match status" value="1"/>
</dbReference>
<dbReference type="Gene3D" id="1.20.120.1910">
    <property type="entry name" value="Cysteine-tRNA ligase, C-terminal anti-codon recognition domain"/>
    <property type="match status" value="1"/>
</dbReference>
<dbReference type="Gene3D" id="3.40.50.620">
    <property type="entry name" value="HUPs"/>
    <property type="match status" value="1"/>
</dbReference>
<dbReference type="HAMAP" id="MF_00041">
    <property type="entry name" value="Cys_tRNA_synth"/>
    <property type="match status" value="1"/>
</dbReference>
<dbReference type="InterPro" id="IPR015803">
    <property type="entry name" value="Cys-tRNA-ligase"/>
</dbReference>
<dbReference type="InterPro" id="IPR015273">
    <property type="entry name" value="Cys-tRNA-synt_Ia_DALR"/>
</dbReference>
<dbReference type="InterPro" id="IPR024909">
    <property type="entry name" value="Cys-tRNA/MSH_ligase"/>
</dbReference>
<dbReference type="InterPro" id="IPR056411">
    <property type="entry name" value="CysS_C"/>
</dbReference>
<dbReference type="InterPro" id="IPR014729">
    <property type="entry name" value="Rossmann-like_a/b/a_fold"/>
</dbReference>
<dbReference type="InterPro" id="IPR032678">
    <property type="entry name" value="tRNA-synt_1_cat_dom"/>
</dbReference>
<dbReference type="InterPro" id="IPR009080">
    <property type="entry name" value="tRNAsynth_Ia_anticodon-bd"/>
</dbReference>
<dbReference type="NCBIfam" id="TIGR00435">
    <property type="entry name" value="cysS"/>
    <property type="match status" value="1"/>
</dbReference>
<dbReference type="PANTHER" id="PTHR10890:SF3">
    <property type="entry name" value="CYSTEINE--TRNA LIGASE, CYTOPLASMIC"/>
    <property type="match status" value="1"/>
</dbReference>
<dbReference type="PANTHER" id="PTHR10890">
    <property type="entry name" value="CYSTEINYL-TRNA SYNTHETASE"/>
    <property type="match status" value="1"/>
</dbReference>
<dbReference type="Pfam" id="PF23493">
    <property type="entry name" value="CysS_C"/>
    <property type="match status" value="1"/>
</dbReference>
<dbReference type="Pfam" id="PF09190">
    <property type="entry name" value="DALR_2"/>
    <property type="match status" value="1"/>
</dbReference>
<dbReference type="Pfam" id="PF01406">
    <property type="entry name" value="tRNA-synt_1e"/>
    <property type="match status" value="1"/>
</dbReference>
<dbReference type="PRINTS" id="PR00983">
    <property type="entry name" value="TRNASYNTHCYS"/>
</dbReference>
<dbReference type="SMART" id="SM00840">
    <property type="entry name" value="DALR_2"/>
    <property type="match status" value="1"/>
</dbReference>
<dbReference type="SUPFAM" id="SSF47323">
    <property type="entry name" value="Anticodon-binding domain of a subclass of class I aminoacyl-tRNA synthetases"/>
    <property type="match status" value="1"/>
</dbReference>
<dbReference type="SUPFAM" id="SSF52374">
    <property type="entry name" value="Nucleotidylyl transferase"/>
    <property type="match status" value="1"/>
</dbReference>
<reference key="1">
    <citation type="journal article" date="2006" name="Genome Res.">
        <title>Skewed genomic variability in strains of the toxigenic bacterial pathogen, Clostridium perfringens.</title>
        <authorList>
            <person name="Myers G.S.A."/>
            <person name="Rasko D.A."/>
            <person name="Cheung J.K."/>
            <person name="Ravel J."/>
            <person name="Seshadri R."/>
            <person name="DeBoy R.T."/>
            <person name="Ren Q."/>
            <person name="Varga J."/>
            <person name="Awad M.M."/>
            <person name="Brinkac L.M."/>
            <person name="Daugherty S.C."/>
            <person name="Haft D.H."/>
            <person name="Dodson R.J."/>
            <person name="Madupu R."/>
            <person name="Nelson W.C."/>
            <person name="Rosovitz M.J."/>
            <person name="Sullivan S.A."/>
            <person name="Khouri H."/>
            <person name="Dimitrov G.I."/>
            <person name="Watkins K.L."/>
            <person name="Mulligan S."/>
            <person name="Benton J."/>
            <person name="Radune D."/>
            <person name="Fisher D.J."/>
            <person name="Atkins H.S."/>
            <person name="Hiscox T."/>
            <person name="Jost B.H."/>
            <person name="Billington S.J."/>
            <person name="Songer J.G."/>
            <person name="McClane B.A."/>
            <person name="Titball R.W."/>
            <person name="Rood J.I."/>
            <person name="Melville S.B."/>
            <person name="Paulsen I.T."/>
        </authorList>
    </citation>
    <scope>NUCLEOTIDE SEQUENCE [LARGE SCALE GENOMIC DNA]</scope>
    <source>
        <strain>SM101 / Type A</strain>
    </source>
</reference>
<feature type="chain" id="PRO_0000332807" description="Cysteine--tRNA ligase">
    <location>
        <begin position="1"/>
        <end position="466"/>
    </location>
</feature>
<feature type="short sequence motif" description="'HIGH' region">
    <location>
        <begin position="30"/>
        <end position="40"/>
    </location>
</feature>
<feature type="short sequence motif" description="'KMSKS' region">
    <location>
        <begin position="265"/>
        <end position="269"/>
    </location>
</feature>
<feature type="binding site" evidence="1">
    <location>
        <position position="28"/>
    </location>
    <ligand>
        <name>Zn(2+)</name>
        <dbReference type="ChEBI" id="CHEBI:29105"/>
    </ligand>
</feature>
<feature type="binding site" evidence="1">
    <location>
        <position position="208"/>
    </location>
    <ligand>
        <name>Zn(2+)</name>
        <dbReference type="ChEBI" id="CHEBI:29105"/>
    </ligand>
</feature>
<feature type="binding site" evidence="1">
    <location>
        <position position="233"/>
    </location>
    <ligand>
        <name>Zn(2+)</name>
        <dbReference type="ChEBI" id="CHEBI:29105"/>
    </ligand>
</feature>
<feature type="binding site" evidence="1">
    <location>
        <position position="237"/>
    </location>
    <ligand>
        <name>Zn(2+)</name>
        <dbReference type="ChEBI" id="CHEBI:29105"/>
    </ligand>
</feature>
<feature type="binding site" evidence="1">
    <location>
        <position position="268"/>
    </location>
    <ligand>
        <name>ATP</name>
        <dbReference type="ChEBI" id="CHEBI:30616"/>
    </ligand>
</feature>
<protein>
    <recommendedName>
        <fullName evidence="1">Cysteine--tRNA ligase</fullName>
        <ecNumber evidence="1">6.1.1.16</ecNumber>
    </recommendedName>
    <alternativeName>
        <fullName evidence="1">Cysteinyl-tRNA synthetase</fullName>
        <shortName evidence="1">CysRS</shortName>
    </alternativeName>
</protein>
<evidence type="ECO:0000255" key="1">
    <source>
        <dbReference type="HAMAP-Rule" id="MF_00041"/>
    </source>
</evidence>
<comment type="catalytic activity">
    <reaction evidence="1">
        <text>tRNA(Cys) + L-cysteine + ATP = L-cysteinyl-tRNA(Cys) + AMP + diphosphate</text>
        <dbReference type="Rhea" id="RHEA:17773"/>
        <dbReference type="Rhea" id="RHEA-COMP:9661"/>
        <dbReference type="Rhea" id="RHEA-COMP:9679"/>
        <dbReference type="ChEBI" id="CHEBI:30616"/>
        <dbReference type="ChEBI" id="CHEBI:33019"/>
        <dbReference type="ChEBI" id="CHEBI:35235"/>
        <dbReference type="ChEBI" id="CHEBI:78442"/>
        <dbReference type="ChEBI" id="CHEBI:78517"/>
        <dbReference type="ChEBI" id="CHEBI:456215"/>
        <dbReference type="EC" id="6.1.1.16"/>
    </reaction>
</comment>
<comment type="cofactor">
    <cofactor evidence="1">
        <name>Zn(2+)</name>
        <dbReference type="ChEBI" id="CHEBI:29105"/>
    </cofactor>
    <text evidence="1">Binds 1 zinc ion per subunit.</text>
</comment>
<comment type="subunit">
    <text evidence="1">Monomer.</text>
</comment>
<comment type="subcellular location">
    <subcellularLocation>
        <location evidence="1">Cytoplasm</location>
    </subcellularLocation>
</comment>
<comment type="similarity">
    <text evidence="1">Belongs to the class-I aminoacyl-tRNA synthetase family.</text>
</comment>
<name>SYC_CLOPS</name>
<gene>
    <name evidence="1" type="primary">cysS</name>
    <name type="ordered locus">CPR_2424</name>
</gene>
<organism>
    <name type="scientific">Clostridium perfringens (strain SM101 / Type A)</name>
    <dbReference type="NCBI Taxonomy" id="289380"/>
    <lineage>
        <taxon>Bacteria</taxon>
        <taxon>Bacillati</taxon>
        <taxon>Bacillota</taxon>
        <taxon>Clostridia</taxon>
        <taxon>Eubacteriales</taxon>
        <taxon>Clostridiaceae</taxon>
        <taxon>Clostridium</taxon>
    </lineage>
</organism>
<accession>Q0SQC1</accession>
<keyword id="KW-0030">Aminoacyl-tRNA synthetase</keyword>
<keyword id="KW-0067">ATP-binding</keyword>
<keyword id="KW-0963">Cytoplasm</keyword>
<keyword id="KW-0436">Ligase</keyword>
<keyword id="KW-0479">Metal-binding</keyword>
<keyword id="KW-0547">Nucleotide-binding</keyword>
<keyword id="KW-0648">Protein biosynthesis</keyword>
<keyword id="KW-0862">Zinc</keyword>
<proteinExistence type="inferred from homology"/>